<evidence type="ECO:0000250" key="1"/>
<evidence type="ECO:0000305" key="2"/>
<name>RS13_PLUXY</name>
<sequence>MGRMHAPGKGISQSALPYRRSVPTWLKLTADDVKEQIFKLGKKGLTPSQIGVMLRDSHGVAQVRFVTGKKILRIMKAMGLAPDLPEDLYYLIKKAVAMGKHLERNRKDKDSKFRLILVESRIHRLARYYKTKSVLPPNWKYESSTASALVA</sequence>
<gene>
    <name type="primary">RpS13</name>
</gene>
<protein>
    <recommendedName>
        <fullName evidence="2">Small ribosomal subunit protein uS15</fullName>
    </recommendedName>
    <alternativeName>
        <fullName>40S ribosomal protein S13</fullName>
    </alternativeName>
</protein>
<keyword id="KW-0687">Ribonucleoprotein</keyword>
<keyword id="KW-0689">Ribosomal protein</keyword>
<dbReference type="EMBL" id="AY174891">
    <property type="protein sequence ID" value="AAN75466.1"/>
    <property type="molecule type" value="mRNA"/>
</dbReference>
<dbReference type="SMR" id="Q8I7U0"/>
<dbReference type="GO" id="GO:0022627">
    <property type="term" value="C:cytosolic small ribosomal subunit"/>
    <property type="evidence" value="ECO:0007669"/>
    <property type="project" value="TreeGrafter"/>
</dbReference>
<dbReference type="GO" id="GO:0005730">
    <property type="term" value="C:nucleolus"/>
    <property type="evidence" value="ECO:0007669"/>
    <property type="project" value="TreeGrafter"/>
</dbReference>
<dbReference type="GO" id="GO:0070181">
    <property type="term" value="F:small ribosomal subunit rRNA binding"/>
    <property type="evidence" value="ECO:0007669"/>
    <property type="project" value="TreeGrafter"/>
</dbReference>
<dbReference type="GO" id="GO:0003735">
    <property type="term" value="F:structural constituent of ribosome"/>
    <property type="evidence" value="ECO:0007669"/>
    <property type="project" value="InterPro"/>
</dbReference>
<dbReference type="GO" id="GO:0006412">
    <property type="term" value="P:translation"/>
    <property type="evidence" value="ECO:0007669"/>
    <property type="project" value="InterPro"/>
</dbReference>
<dbReference type="CDD" id="cd00353">
    <property type="entry name" value="Ribosomal_S15p_S13e"/>
    <property type="match status" value="1"/>
</dbReference>
<dbReference type="FunFam" id="1.10.287.10:FF:000003">
    <property type="entry name" value="40S ribosomal protein S13"/>
    <property type="match status" value="1"/>
</dbReference>
<dbReference type="FunFam" id="4.10.860.130:FF:000001">
    <property type="entry name" value="40S ribosomal protein S13"/>
    <property type="match status" value="1"/>
</dbReference>
<dbReference type="Gene3D" id="4.10.860.130">
    <property type="match status" value="1"/>
</dbReference>
<dbReference type="Gene3D" id="1.10.287.10">
    <property type="entry name" value="S15/NS1, RNA-binding"/>
    <property type="match status" value="1"/>
</dbReference>
<dbReference type="HAMAP" id="MF_01343_A">
    <property type="entry name" value="Ribosomal_uS15_A"/>
    <property type="match status" value="1"/>
</dbReference>
<dbReference type="InterPro" id="IPR000589">
    <property type="entry name" value="Ribosomal_uS15"/>
</dbReference>
<dbReference type="InterPro" id="IPR023029">
    <property type="entry name" value="Ribosomal_uS15_arc_euk"/>
</dbReference>
<dbReference type="InterPro" id="IPR012606">
    <property type="entry name" value="Ribosomal_uS15_N"/>
</dbReference>
<dbReference type="InterPro" id="IPR009068">
    <property type="entry name" value="uS15_NS1_RNA-bd_sf"/>
</dbReference>
<dbReference type="NCBIfam" id="NF006331">
    <property type="entry name" value="PRK08561.1"/>
    <property type="match status" value="1"/>
</dbReference>
<dbReference type="PANTHER" id="PTHR11885">
    <property type="entry name" value="RIBOSOMAL PROTEIN S15P/S13E"/>
    <property type="match status" value="1"/>
</dbReference>
<dbReference type="PANTHER" id="PTHR11885:SF6">
    <property type="entry name" value="SMALL RIBOSOMAL SUBUNIT PROTEIN US15"/>
    <property type="match status" value="1"/>
</dbReference>
<dbReference type="Pfam" id="PF08069">
    <property type="entry name" value="Ribosomal_S13_N"/>
    <property type="match status" value="1"/>
</dbReference>
<dbReference type="Pfam" id="PF00312">
    <property type="entry name" value="Ribosomal_S15"/>
    <property type="match status" value="1"/>
</dbReference>
<dbReference type="SMART" id="SM01386">
    <property type="entry name" value="Ribosomal_S13_N"/>
    <property type="match status" value="1"/>
</dbReference>
<dbReference type="SMART" id="SM01387">
    <property type="entry name" value="Ribosomal_S15"/>
    <property type="match status" value="1"/>
</dbReference>
<dbReference type="SUPFAM" id="SSF47060">
    <property type="entry name" value="S15/NS1 RNA-binding domain"/>
    <property type="match status" value="1"/>
</dbReference>
<dbReference type="PROSITE" id="PS00362">
    <property type="entry name" value="RIBOSOMAL_S15"/>
    <property type="match status" value="1"/>
</dbReference>
<proteinExistence type="evidence at transcript level"/>
<feature type="initiator methionine" description="Removed" evidence="1">
    <location>
        <position position="1"/>
    </location>
</feature>
<feature type="chain" id="PRO_0000115678" description="Small ribosomal subunit protein uS15">
    <location>
        <begin position="2"/>
        <end position="151"/>
    </location>
</feature>
<organism>
    <name type="scientific">Plutella xylostella</name>
    <name type="common">Diamondback moth</name>
    <name type="synonym">Plutella maculipennis</name>
    <dbReference type="NCBI Taxonomy" id="51655"/>
    <lineage>
        <taxon>Eukaryota</taxon>
        <taxon>Metazoa</taxon>
        <taxon>Ecdysozoa</taxon>
        <taxon>Arthropoda</taxon>
        <taxon>Hexapoda</taxon>
        <taxon>Insecta</taxon>
        <taxon>Pterygota</taxon>
        <taxon>Neoptera</taxon>
        <taxon>Endopterygota</taxon>
        <taxon>Lepidoptera</taxon>
        <taxon>Glossata</taxon>
        <taxon>Ditrysia</taxon>
        <taxon>Yponomeutoidea</taxon>
        <taxon>Plutellidae</taxon>
        <taxon>Plutella</taxon>
    </lineage>
</organism>
<reference key="1">
    <citation type="submission" date="2002-11" db="EMBL/GenBank/DDBJ databases">
        <title>Cloning and characterization of full-length ribosomal protein sequence of Plutella xylostella.</title>
        <authorList>
            <person name="Wang S."/>
            <person name="Qiao C."/>
            <person name="Sheng C."/>
        </authorList>
    </citation>
    <scope>NUCLEOTIDE SEQUENCE [MRNA]</scope>
</reference>
<accession>Q8I7U0</accession>
<comment type="similarity">
    <text evidence="2">Belongs to the universal ribosomal protein uS15 family.</text>
</comment>